<proteinExistence type="evidence at protein level"/>
<feature type="transit peptide" description="Mitochondrion">
    <location>
        <begin position="1" status="less than"/>
        <end position="19"/>
    </location>
</feature>
<feature type="chain" id="PRO_0000000992" description="Adrenodoxin, mitochondrial">
    <location>
        <begin position="20"/>
        <end position="143"/>
    </location>
</feature>
<feature type="domain" description="2Fe-2S ferredoxin-type" evidence="3">
    <location>
        <begin position="26"/>
        <end position="130"/>
    </location>
</feature>
<feature type="binding site" evidence="3">
    <location>
        <position position="65"/>
    </location>
    <ligand>
        <name>[2Fe-2S] cluster</name>
        <dbReference type="ChEBI" id="CHEBI:190135"/>
    </ligand>
</feature>
<feature type="binding site" evidence="3">
    <location>
        <position position="71"/>
    </location>
    <ligand>
        <name>[2Fe-2S] cluster</name>
        <dbReference type="ChEBI" id="CHEBI:190135"/>
    </ligand>
</feature>
<feature type="binding site" evidence="3">
    <location>
        <position position="74"/>
    </location>
    <ligand>
        <name>[2Fe-2S] cluster</name>
        <dbReference type="ChEBI" id="CHEBI:190135"/>
    </ligand>
</feature>
<feature type="binding site" evidence="3">
    <location>
        <position position="111"/>
    </location>
    <ligand>
        <name>[2Fe-2S] cluster</name>
        <dbReference type="ChEBI" id="CHEBI:190135"/>
    </ligand>
</feature>
<feature type="sequence conflict" description="In Ref. 2; AAA82597." evidence="4" ref="2">
    <original>V</original>
    <variation>P</variation>
    <location>
        <position position="4"/>
    </location>
</feature>
<feature type="sequence conflict" description="In Ref. 2; AAA82597." evidence="4" ref="2">
    <original>A</original>
    <variation>S</variation>
    <location>
        <position position="16"/>
    </location>
</feature>
<feature type="non-terminal residue">
    <location>
        <position position="1"/>
    </location>
</feature>
<gene>
    <name type="primary">FDX1</name>
</gene>
<dbReference type="EMBL" id="M21275">
    <property type="protein sequence ID" value="AAA48576.1"/>
    <property type="molecule type" value="mRNA"/>
</dbReference>
<dbReference type="EMBL" id="U25823">
    <property type="protein sequence ID" value="AAA82597.1"/>
    <property type="molecule type" value="mRNA"/>
</dbReference>
<dbReference type="PIR" id="A31574">
    <property type="entry name" value="A31574"/>
</dbReference>
<dbReference type="RefSeq" id="NP_001185597.1">
    <property type="nucleotide sequence ID" value="NM_001198668.1"/>
</dbReference>
<dbReference type="SMR" id="P13216"/>
<dbReference type="FunCoup" id="P13216">
    <property type="interactions" value="634"/>
</dbReference>
<dbReference type="STRING" id="9031.ENSGALP00000040794"/>
<dbReference type="PaxDb" id="9031-ENSGALP00000040794"/>
<dbReference type="GeneID" id="373947"/>
<dbReference type="KEGG" id="gga:373947"/>
<dbReference type="CTD" id="2230"/>
<dbReference type="VEuPathDB" id="HostDB:geneid_373947"/>
<dbReference type="eggNOG" id="KOG3309">
    <property type="taxonomic scope" value="Eukaryota"/>
</dbReference>
<dbReference type="HOGENOM" id="CLU_082632_2_1_1"/>
<dbReference type="InParanoid" id="P13216"/>
<dbReference type="OrthoDB" id="268593at2759"/>
<dbReference type="PhylomeDB" id="P13216"/>
<dbReference type="Proteomes" id="UP000000539">
    <property type="component" value="Unassembled WGS sequence"/>
</dbReference>
<dbReference type="GO" id="GO:0005759">
    <property type="term" value="C:mitochondrial matrix"/>
    <property type="evidence" value="ECO:0000250"/>
    <property type="project" value="UniProtKB"/>
</dbReference>
<dbReference type="GO" id="GO:0005739">
    <property type="term" value="C:mitochondrion"/>
    <property type="evidence" value="ECO:0000318"/>
    <property type="project" value="GO_Central"/>
</dbReference>
<dbReference type="GO" id="GO:0051537">
    <property type="term" value="F:2 iron, 2 sulfur cluster binding"/>
    <property type="evidence" value="ECO:0007669"/>
    <property type="project" value="UniProtKB-KW"/>
</dbReference>
<dbReference type="GO" id="GO:0009055">
    <property type="term" value="F:electron transfer activity"/>
    <property type="evidence" value="ECO:0000318"/>
    <property type="project" value="GO_Central"/>
</dbReference>
<dbReference type="GO" id="GO:0046872">
    <property type="term" value="F:metal ion binding"/>
    <property type="evidence" value="ECO:0007669"/>
    <property type="project" value="UniProtKB-KW"/>
</dbReference>
<dbReference type="GO" id="GO:0008203">
    <property type="term" value="P:cholesterol metabolic process"/>
    <property type="evidence" value="ECO:0007669"/>
    <property type="project" value="UniProtKB-KW"/>
</dbReference>
<dbReference type="GO" id="GO:0022900">
    <property type="term" value="P:electron transport chain"/>
    <property type="evidence" value="ECO:0000318"/>
    <property type="project" value="GO_Central"/>
</dbReference>
<dbReference type="GO" id="GO:0140647">
    <property type="term" value="P:P450-containing electron transport chain"/>
    <property type="evidence" value="ECO:0007669"/>
    <property type="project" value="InterPro"/>
</dbReference>
<dbReference type="GO" id="GO:0006694">
    <property type="term" value="P:steroid biosynthetic process"/>
    <property type="evidence" value="ECO:0007669"/>
    <property type="project" value="UniProtKB-KW"/>
</dbReference>
<dbReference type="CDD" id="cd00207">
    <property type="entry name" value="fer2"/>
    <property type="match status" value="1"/>
</dbReference>
<dbReference type="FunFam" id="3.10.20.30:FF:000013">
    <property type="entry name" value="Adrenodoxin, mitochondrial"/>
    <property type="match status" value="1"/>
</dbReference>
<dbReference type="Gene3D" id="3.10.20.30">
    <property type="match status" value="1"/>
</dbReference>
<dbReference type="InterPro" id="IPR036010">
    <property type="entry name" value="2Fe-2S_ferredoxin-like_sf"/>
</dbReference>
<dbReference type="InterPro" id="IPR001041">
    <property type="entry name" value="2Fe-2S_ferredoxin-type"/>
</dbReference>
<dbReference type="InterPro" id="IPR001055">
    <property type="entry name" value="Adrenodoxin-like"/>
</dbReference>
<dbReference type="InterPro" id="IPR018298">
    <property type="entry name" value="Adrenodoxin_Fe-S_BS"/>
</dbReference>
<dbReference type="InterPro" id="IPR012675">
    <property type="entry name" value="Beta-grasp_dom_sf"/>
</dbReference>
<dbReference type="PANTHER" id="PTHR23426:SF26">
    <property type="entry name" value="ADRENODOXIN, MITOCHONDRIAL"/>
    <property type="match status" value="1"/>
</dbReference>
<dbReference type="PANTHER" id="PTHR23426">
    <property type="entry name" value="FERREDOXIN/ADRENODOXIN"/>
    <property type="match status" value="1"/>
</dbReference>
<dbReference type="Pfam" id="PF00111">
    <property type="entry name" value="Fer2"/>
    <property type="match status" value="1"/>
</dbReference>
<dbReference type="PRINTS" id="PR00355">
    <property type="entry name" value="ADRENODOXIN"/>
</dbReference>
<dbReference type="SUPFAM" id="SSF54292">
    <property type="entry name" value="2Fe-2S ferredoxin-like"/>
    <property type="match status" value="1"/>
</dbReference>
<dbReference type="PROSITE" id="PS51085">
    <property type="entry name" value="2FE2S_FER_2"/>
    <property type="match status" value="1"/>
</dbReference>
<dbReference type="PROSITE" id="PS00814">
    <property type="entry name" value="ADX"/>
    <property type="match status" value="1"/>
</dbReference>
<keyword id="KW-0001">2Fe-2S</keyword>
<keyword id="KW-0153">Cholesterol metabolism</keyword>
<keyword id="KW-0249">Electron transport</keyword>
<keyword id="KW-0408">Iron</keyword>
<keyword id="KW-0411">Iron-sulfur</keyword>
<keyword id="KW-0443">Lipid metabolism</keyword>
<keyword id="KW-0479">Metal-binding</keyword>
<keyword id="KW-0496">Mitochondrion</keyword>
<keyword id="KW-1185">Reference proteome</keyword>
<keyword id="KW-0753">Steroid metabolism</keyword>
<keyword id="KW-0755">Steroidogenesis</keyword>
<keyword id="KW-1207">Sterol metabolism</keyword>
<keyword id="KW-0809">Transit peptide</keyword>
<keyword id="KW-0813">Transport</keyword>
<comment type="function">
    <text evidence="1">Essential for the synthesis of various steroid hormones. Participates in the reduction of mitochondrial cytochrome P450 for steroidogenesis. Transfers electrons from adrenodoxin reductase to CYP11A1, a cytochrome P450 that catalyzes cholesterol side-chain cleavage. Does not form a ternary complex with adrenodoxin reductase and CYP11A1 but shuttles between the two enzymes to transfer electrons.</text>
</comment>
<comment type="cofactor">
    <cofactor>
        <name>[2Fe-2S] cluster</name>
        <dbReference type="ChEBI" id="CHEBI:190135"/>
    </cofactor>
    <text>Binds 1 [2Fe-2S] cluster.</text>
</comment>
<comment type="subcellular location">
    <subcellularLocation>
        <location evidence="2">Mitochondrion matrix</location>
    </subcellularLocation>
</comment>
<comment type="similarity">
    <text evidence="4">Belongs to the adrenodoxin/putidaredoxin family.</text>
</comment>
<reference key="1">
    <citation type="journal article" date="1988" name="Biochem. Biophys. Res. Commun.">
        <title>Deduced amino acid sequence of mature chicken testis ferredoxin.</title>
        <authorList>
            <person name="Kagimoto K."/>
            <person name="McCarthy J.L."/>
            <person name="Waterman M.R."/>
            <person name="Kagimoto M."/>
        </authorList>
    </citation>
    <scope>NUCLEOTIDE SEQUENCE [MRNA]</scope>
    <source>
        <tissue>Testis</tissue>
    </source>
</reference>
<reference key="2">
    <citation type="submission" date="1995-12" db="EMBL/GenBank/DDBJ databases">
        <authorList>
            <person name="Blanchard R.K."/>
            <person name="Henry H.L."/>
        </authorList>
    </citation>
    <scope>NUCLEOTIDE SEQUENCE [MRNA] OF 4-143</scope>
    <source>
        <tissue>Kidney</tissue>
    </source>
</reference>
<reference key="3">
    <citation type="journal article" date="1991" name="Biochemistry">
        <title>1H NMR spectra of vertebrate [2Fe-2S] ferredoxins. Hyperfine resonances suggest different electron delocalization patterns from plant ferredoxins.</title>
        <authorList>
            <person name="Skjeldal L."/>
            <person name="Markley J.L."/>
            <person name="Coghlan V.M."/>
            <person name="Vickery L.E."/>
        </authorList>
    </citation>
    <scope>STRUCTURE BY NMR</scope>
</reference>
<evidence type="ECO:0000250" key="1">
    <source>
        <dbReference type="UniProtKB" id="P00257"/>
    </source>
</evidence>
<evidence type="ECO:0000250" key="2">
    <source>
        <dbReference type="UniProtKB" id="P10109"/>
    </source>
</evidence>
<evidence type="ECO:0000255" key="3">
    <source>
        <dbReference type="PROSITE-ProRule" id="PRU00465"/>
    </source>
</evidence>
<evidence type="ECO:0000305" key="4"/>
<name>ADX_CHICK</name>
<protein>
    <recommendedName>
        <fullName>Adrenodoxin, mitochondrial</fullName>
    </recommendedName>
    <alternativeName>
        <fullName>Adrenal ferredoxin</fullName>
    </alternativeName>
</protein>
<organism>
    <name type="scientific">Gallus gallus</name>
    <name type="common">Chicken</name>
    <dbReference type="NCBI Taxonomy" id="9031"/>
    <lineage>
        <taxon>Eukaryota</taxon>
        <taxon>Metazoa</taxon>
        <taxon>Chordata</taxon>
        <taxon>Craniata</taxon>
        <taxon>Vertebrata</taxon>
        <taxon>Euteleostomi</taxon>
        <taxon>Archelosauria</taxon>
        <taxon>Archosauria</taxon>
        <taxon>Dinosauria</taxon>
        <taxon>Saurischia</taxon>
        <taxon>Theropoda</taxon>
        <taxon>Coelurosauria</taxon>
        <taxon>Aves</taxon>
        <taxon>Neognathae</taxon>
        <taxon>Galloanserae</taxon>
        <taxon>Galliformes</taxon>
        <taxon>Phasianidae</taxon>
        <taxon>Phasianinae</taxon>
        <taxon>Gallus</taxon>
    </lineage>
</organism>
<sequence length="143" mass="15483">CSAVAVRTLRPLSLSARAACSSEDKITVHFINRDGDKLTAKGKPGDSLLDVVVENNLDIDGFGACEGTLACSTCHLIFEDHIFEKLDAITDEEMDMLDLAYGLTETSRLGCQICLKKSMDNMTVRVPEAVADARQSVDLSKNS</sequence>
<accession>P13216</accession>